<proteinExistence type="inferred from homology"/>
<gene>
    <name evidence="1" type="primary">pyrB</name>
    <name type="ordered locus">Saro_3061</name>
</gene>
<evidence type="ECO:0000255" key="1">
    <source>
        <dbReference type="HAMAP-Rule" id="MF_00001"/>
    </source>
</evidence>
<keyword id="KW-0665">Pyrimidine biosynthesis</keyword>
<keyword id="KW-1185">Reference proteome</keyword>
<keyword id="KW-0808">Transferase</keyword>
<accession>Q2G3S7</accession>
<comment type="function">
    <text evidence="1">Catalyzes the condensation of carbamoyl phosphate and aspartate to form carbamoyl aspartate and inorganic phosphate, the committed step in the de novo pyrimidine nucleotide biosynthesis pathway.</text>
</comment>
<comment type="catalytic activity">
    <reaction evidence="1">
        <text>carbamoyl phosphate + L-aspartate = N-carbamoyl-L-aspartate + phosphate + H(+)</text>
        <dbReference type="Rhea" id="RHEA:20013"/>
        <dbReference type="ChEBI" id="CHEBI:15378"/>
        <dbReference type="ChEBI" id="CHEBI:29991"/>
        <dbReference type="ChEBI" id="CHEBI:32814"/>
        <dbReference type="ChEBI" id="CHEBI:43474"/>
        <dbReference type="ChEBI" id="CHEBI:58228"/>
        <dbReference type="EC" id="2.1.3.2"/>
    </reaction>
</comment>
<comment type="pathway">
    <text evidence="1">Pyrimidine metabolism; UMP biosynthesis via de novo pathway; (S)-dihydroorotate from bicarbonate: step 2/3.</text>
</comment>
<comment type="subunit">
    <text evidence="1">Heterododecamer (2C3:3R2) of six catalytic PyrB chains organized as two trimers (C3), and six regulatory PyrI chains organized as three dimers (R2).</text>
</comment>
<comment type="similarity">
    <text evidence="1">Belongs to the aspartate/ornithine carbamoyltransferase superfamily. ATCase family.</text>
</comment>
<reference key="1">
    <citation type="submission" date="2006-01" db="EMBL/GenBank/DDBJ databases">
        <title>Complete sequence of Novosphingobium aromaticivorans DSM 12444.</title>
        <authorList>
            <consortium name="US DOE Joint Genome Institute"/>
            <person name="Copeland A."/>
            <person name="Lucas S."/>
            <person name="Lapidus A."/>
            <person name="Barry K."/>
            <person name="Detter J.C."/>
            <person name="Glavina T."/>
            <person name="Hammon N."/>
            <person name="Israni S."/>
            <person name="Pitluck S."/>
            <person name="Chain P."/>
            <person name="Malfatti S."/>
            <person name="Shin M."/>
            <person name="Vergez L."/>
            <person name="Schmutz J."/>
            <person name="Larimer F."/>
            <person name="Land M."/>
            <person name="Kyrpides N."/>
            <person name="Ivanova N."/>
            <person name="Fredrickson J."/>
            <person name="Balkwill D."/>
            <person name="Romine M.F."/>
            <person name="Richardson P."/>
        </authorList>
    </citation>
    <scope>NUCLEOTIDE SEQUENCE [LARGE SCALE GENOMIC DNA]</scope>
    <source>
        <strain>ATCC 700278 / DSM 12444 / CCUG 56034 / CIP 105152 / NBRC 16084 / F199</strain>
    </source>
</reference>
<feature type="chain" id="PRO_0000321128" description="Aspartate carbamoyltransferase catalytic subunit">
    <location>
        <begin position="1"/>
        <end position="341"/>
    </location>
</feature>
<feature type="binding site" evidence="1">
    <location>
        <position position="74"/>
    </location>
    <ligand>
        <name>carbamoyl phosphate</name>
        <dbReference type="ChEBI" id="CHEBI:58228"/>
    </ligand>
</feature>
<feature type="binding site" evidence="1">
    <location>
        <position position="75"/>
    </location>
    <ligand>
        <name>carbamoyl phosphate</name>
        <dbReference type="ChEBI" id="CHEBI:58228"/>
    </ligand>
</feature>
<feature type="binding site" evidence="1">
    <location>
        <position position="102"/>
    </location>
    <ligand>
        <name>L-aspartate</name>
        <dbReference type="ChEBI" id="CHEBI:29991"/>
    </ligand>
</feature>
<feature type="binding site" evidence="1">
    <location>
        <position position="124"/>
    </location>
    <ligand>
        <name>carbamoyl phosphate</name>
        <dbReference type="ChEBI" id="CHEBI:58228"/>
    </ligand>
</feature>
<feature type="binding site" evidence="1">
    <location>
        <position position="152"/>
    </location>
    <ligand>
        <name>carbamoyl phosphate</name>
        <dbReference type="ChEBI" id="CHEBI:58228"/>
    </ligand>
</feature>
<feature type="binding site" evidence="1">
    <location>
        <position position="155"/>
    </location>
    <ligand>
        <name>carbamoyl phosphate</name>
        <dbReference type="ChEBI" id="CHEBI:58228"/>
    </ligand>
</feature>
<feature type="binding site" evidence="1">
    <location>
        <position position="190"/>
    </location>
    <ligand>
        <name>L-aspartate</name>
        <dbReference type="ChEBI" id="CHEBI:29991"/>
    </ligand>
</feature>
<feature type="binding site" evidence="1">
    <location>
        <position position="244"/>
    </location>
    <ligand>
        <name>L-aspartate</name>
        <dbReference type="ChEBI" id="CHEBI:29991"/>
    </ligand>
</feature>
<feature type="binding site" evidence="1">
    <location>
        <position position="285"/>
    </location>
    <ligand>
        <name>carbamoyl phosphate</name>
        <dbReference type="ChEBI" id="CHEBI:58228"/>
    </ligand>
</feature>
<feature type="binding site" evidence="1">
    <location>
        <position position="286"/>
    </location>
    <ligand>
        <name>carbamoyl phosphate</name>
        <dbReference type="ChEBI" id="CHEBI:58228"/>
    </ligand>
</feature>
<organism>
    <name type="scientific">Novosphingobium aromaticivorans (strain ATCC 700278 / DSM 12444 / CCUG 56034 / CIP 105152 / NBRC 16084 / F199)</name>
    <dbReference type="NCBI Taxonomy" id="279238"/>
    <lineage>
        <taxon>Bacteria</taxon>
        <taxon>Pseudomonadati</taxon>
        <taxon>Pseudomonadota</taxon>
        <taxon>Alphaproteobacteria</taxon>
        <taxon>Sphingomonadales</taxon>
        <taxon>Sphingomonadaceae</taxon>
        <taxon>Novosphingobium</taxon>
    </lineage>
</organism>
<dbReference type="EC" id="2.1.3.2" evidence="1"/>
<dbReference type="EMBL" id="CP000248">
    <property type="protein sequence ID" value="ABD27496.1"/>
    <property type="molecule type" value="Genomic_DNA"/>
</dbReference>
<dbReference type="RefSeq" id="WP_011446700.1">
    <property type="nucleotide sequence ID" value="NC_007794.1"/>
</dbReference>
<dbReference type="SMR" id="Q2G3S7"/>
<dbReference type="STRING" id="279238.Saro_3061"/>
<dbReference type="KEGG" id="nar:Saro_3061"/>
<dbReference type="eggNOG" id="COG0540">
    <property type="taxonomic scope" value="Bacteria"/>
</dbReference>
<dbReference type="HOGENOM" id="CLU_043846_2_0_5"/>
<dbReference type="UniPathway" id="UPA00070">
    <property type="reaction ID" value="UER00116"/>
</dbReference>
<dbReference type="Proteomes" id="UP000009134">
    <property type="component" value="Chromosome"/>
</dbReference>
<dbReference type="GO" id="GO:0005829">
    <property type="term" value="C:cytosol"/>
    <property type="evidence" value="ECO:0007669"/>
    <property type="project" value="TreeGrafter"/>
</dbReference>
<dbReference type="GO" id="GO:0016597">
    <property type="term" value="F:amino acid binding"/>
    <property type="evidence" value="ECO:0007669"/>
    <property type="project" value="InterPro"/>
</dbReference>
<dbReference type="GO" id="GO:0004070">
    <property type="term" value="F:aspartate carbamoyltransferase activity"/>
    <property type="evidence" value="ECO:0007669"/>
    <property type="project" value="UniProtKB-UniRule"/>
</dbReference>
<dbReference type="GO" id="GO:0006207">
    <property type="term" value="P:'de novo' pyrimidine nucleobase biosynthetic process"/>
    <property type="evidence" value="ECO:0007669"/>
    <property type="project" value="InterPro"/>
</dbReference>
<dbReference type="GO" id="GO:0044205">
    <property type="term" value="P:'de novo' UMP biosynthetic process"/>
    <property type="evidence" value="ECO:0007669"/>
    <property type="project" value="UniProtKB-UniRule"/>
</dbReference>
<dbReference type="GO" id="GO:0006520">
    <property type="term" value="P:amino acid metabolic process"/>
    <property type="evidence" value="ECO:0007669"/>
    <property type="project" value="InterPro"/>
</dbReference>
<dbReference type="FunFam" id="3.40.50.1370:FF:000007">
    <property type="entry name" value="Aspartate carbamoyltransferase"/>
    <property type="match status" value="1"/>
</dbReference>
<dbReference type="Gene3D" id="3.40.50.1370">
    <property type="entry name" value="Aspartate/ornithine carbamoyltransferase"/>
    <property type="match status" value="2"/>
</dbReference>
<dbReference type="HAMAP" id="MF_00001">
    <property type="entry name" value="Asp_carb_tr"/>
    <property type="match status" value="1"/>
</dbReference>
<dbReference type="InterPro" id="IPR006132">
    <property type="entry name" value="Asp/Orn_carbamoyltranf_P-bd"/>
</dbReference>
<dbReference type="InterPro" id="IPR006130">
    <property type="entry name" value="Asp/Orn_carbamoylTrfase"/>
</dbReference>
<dbReference type="InterPro" id="IPR036901">
    <property type="entry name" value="Asp/Orn_carbamoylTrfase_sf"/>
</dbReference>
<dbReference type="InterPro" id="IPR002082">
    <property type="entry name" value="Asp_carbamoyltransf"/>
</dbReference>
<dbReference type="InterPro" id="IPR006131">
    <property type="entry name" value="Asp_carbamoyltransf_Asp/Orn-bd"/>
</dbReference>
<dbReference type="NCBIfam" id="TIGR00670">
    <property type="entry name" value="asp_carb_tr"/>
    <property type="match status" value="1"/>
</dbReference>
<dbReference type="NCBIfam" id="NF002032">
    <property type="entry name" value="PRK00856.1"/>
    <property type="match status" value="1"/>
</dbReference>
<dbReference type="PANTHER" id="PTHR45753:SF6">
    <property type="entry name" value="ASPARTATE CARBAMOYLTRANSFERASE"/>
    <property type="match status" value="1"/>
</dbReference>
<dbReference type="PANTHER" id="PTHR45753">
    <property type="entry name" value="ORNITHINE CARBAMOYLTRANSFERASE, MITOCHONDRIAL"/>
    <property type="match status" value="1"/>
</dbReference>
<dbReference type="Pfam" id="PF00185">
    <property type="entry name" value="OTCace"/>
    <property type="match status" value="1"/>
</dbReference>
<dbReference type="Pfam" id="PF02729">
    <property type="entry name" value="OTCace_N"/>
    <property type="match status" value="1"/>
</dbReference>
<dbReference type="PRINTS" id="PR00100">
    <property type="entry name" value="AOTCASE"/>
</dbReference>
<dbReference type="PRINTS" id="PR00101">
    <property type="entry name" value="ATCASE"/>
</dbReference>
<dbReference type="SUPFAM" id="SSF53671">
    <property type="entry name" value="Aspartate/ornithine carbamoyltransferase"/>
    <property type="match status" value="1"/>
</dbReference>
<dbReference type="PROSITE" id="PS00097">
    <property type="entry name" value="CARBAMOYLTRANSFERASE"/>
    <property type="match status" value="1"/>
</dbReference>
<protein>
    <recommendedName>
        <fullName evidence="1">Aspartate carbamoyltransferase catalytic subunit</fullName>
        <ecNumber evidence="1">2.1.3.2</ecNumber>
    </recommendedName>
    <alternativeName>
        <fullName evidence="1">Aspartate transcarbamylase</fullName>
        <shortName evidence="1">ATCase</shortName>
    </alternativeName>
</protein>
<name>PYRB_NOVAD</name>
<sequence>MQSQNTPAAGRYPAGGLAFPHRDLTGIGQLARHEILYLLDEAEQWVELNRQSQKTTDLLNGLTIINAFFENSTRTLLSFEIAGKRLGADVVNMHAATSSVKKGETLIDTAMTLNAMRADAIVIRHASSGAVRLIAEKVDCPVLNAGDGQHEHPTQALLDALTMRHAMKLPAGSDLNGLKVTICGDILHSRVARSNILSLTALGAEVRVCAPPALMPAEIEAMGVTPFHDFDAALKGANIVMMLRLQQERMSGQFIPSPREYRHLYGLTPERLARAEADAFVMHPGPMNRGIEIDSTVADHPTRSLITRQVEMGVAIRMACLEVLTRRARRTPGWEAEGASA</sequence>